<keyword id="KW-0007">Acetylation</keyword>
<keyword id="KW-0032">Aminotransferase</keyword>
<keyword id="KW-0456">Lyase</keyword>
<keyword id="KW-0663">Pyridoxal phosphate</keyword>
<keyword id="KW-1185">Reference proteome</keyword>
<keyword id="KW-0808">Transferase</keyword>
<comment type="function">
    <text evidence="3">Catalyzes the irreversible transamination of the L-tryptophan metabolite L-kynurenine to form kynurenic acid (KA), an intermediate in the tryptophan catabolic pathway which is also a broad spectrum antagonist of the three ionotropic excitatory amino acid receptors among others. May catalyze the beta-elimination of S-conjugates and Se-conjugates of L-(seleno)cysteine, resulting in the cleavage of the C-S or C-Se bond. Has transaminase activity towards L-kynurenine, tryptophan, phenylalanine, serine, cysteine, methionine, histidine, glutamine and asparagine with glyoxylate as an amino group acceptor (in vitro). Has lower activity with 2-oxoglutarate as amino group acceptor (in vitro).</text>
</comment>
<comment type="catalytic activity">
    <reaction evidence="3">
        <text>L-kynurenine + 2-oxoglutarate = kynurenate + L-glutamate + H2O</text>
        <dbReference type="Rhea" id="RHEA:65560"/>
        <dbReference type="ChEBI" id="CHEBI:15377"/>
        <dbReference type="ChEBI" id="CHEBI:16810"/>
        <dbReference type="ChEBI" id="CHEBI:29985"/>
        <dbReference type="ChEBI" id="CHEBI:57959"/>
        <dbReference type="ChEBI" id="CHEBI:58454"/>
        <dbReference type="EC" id="2.6.1.7"/>
    </reaction>
    <physiologicalReaction direction="left-to-right" evidence="3">
        <dbReference type="Rhea" id="RHEA:65561"/>
    </physiologicalReaction>
</comment>
<comment type="catalytic activity">
    <reaction evidence="3">
        <text>L-kynurenine + glyoxylate = kynurenate + glycine + H2O</text>
        <dbReference type="Rhea" id="RHEA:65896"/>
        <dbReference type="ChEBI" id="CHEBI:15377"/>
        <dbReference type="ChEBI" id="CHEBI:36655"/>
        <dbReference type="ChEBI" id="CHEBI:57305"/>
        <dbReference type="ChEBI" id="CHEBI:57959"/>
        <dbReference type="ChEBI" id="CHEBI:58454"/>
        <dbReference type="EC" id="2.6.1.63"/>
    </reaction>
    <physiologicalReaction direction="left-to-right" evidence="3">
        <dbReference type="Rhea" id="RHEA:65897"/>
    </physiologicalReaction>
</comment>
<comment type="catalytic activity">
    <reaction evidence="3">
        <text>3-hydroxy-L-kynurenine + glyoxylate = xanthurenate + glycine + H2O</text>
        <dbReference type="Rhea" id="RHEA:65900"/>
        <dbReference type="ChEBI" id="CHEBI:15377"/>
        <dbReference type="ChEBI" id="CHEBI:36655"/>
        <dbReference type="ChEBI" id="CHEBI:57305"/>
        <dbReference type="ChEBI" id="CHEBI:58125"/>
        <dbReference type="ChEBI" id="CHEBI:71201"/>
        <dbReference type="EC" id="2.6.1.63"/>
    </reaction>
    <physiologicalReaction direction="left-to-right" evidence="3">
        <dbReference type="Rhea" id="RHEA:65901"/>
    </physiologicalReaction>
</comment>
<comment type="catalytic activity">
    <reaction evidence="3">
        <text>an S-substituted L-cysteine + H2O = a thiol + pyruvate + NH4(+)</text>
        <dbReference type="Rhea" id="RHEA:18121"/>
        <dbReference type="ChEBI" id="CHEBI:15361"/>
        <dbReference type="ChEBI" id="CHEBI:15377"/>
        <dbReference type="ChEBI" id="CHEBI:28938"/>
        <dbReference type="ChEBI" id="CHEBI:29256"/>
        <dbReference type="ChEBI" id="CHEBI:58717"/>
        <dbReference type="EC" id="4.4.1.13"/>
    </reaction>
    <physiologicalReaction direction="left-to-right" evidence="3">
        <dbReference type="Rhea" id="RHEA:18122"/>
    </physiologicalReaction>
</comment>
<comment type="cofactor">
    <cofactor evidence="3">
        <name>pyridoxal 5'-phosphate</name>
        <dbReference type="ChEBI" id="CHEBI:597326"/>
    </cofactor>
</comment>
<comment type="pathway">
    <text evidence="3">Amino-acid degradation; L-kynurenine degradation; kynurenate from L-kynurenine: step 1/2.</text>
</comment>
<comment type="subunit">
    <text evidence="3">Homodimer.</text>
</comment>
<comment type="similarity">
    <text evidence="4">Belongs to the class-I pyridoxal-phosphate-dependent aminotransferase family.</text>
</comment>
<reference key="1">
    <citation type="submission" date="2006-08" db="EMBL/GenBank/DDBJ databases">
        <authorList>
            <consortium name="NIH - Mammalian Gene Collection (MGC) project"/>
        </authorList>
    </citation>
    <scope>NUCLEOTIDE SEQUENCE [LARGE SCALE MRNA]</scope>
    <source>
        <strain>Hereford</strain>
        <tissue>Fetal liver</tissue>
    </source>
</reference>
<accession>Q0P5G4</accession>
<protein>
    <recommendedName>
        <fullName evidence="3">Kynurenine--oxoglutarate transaminase 3</fullName>
        <ecNumber evidence="3">2.6.1.7</ecNumber>
    </recommendedName>
    <alternativeName>
        <fullName evidence="3">Cysteine-S-conjugate beta-lyase 2</fullName>
        <ecNumber evidence="3">4.4.1.13</ecNumber>
    </alternativeName>
    <alternativeName>
        <fullName evidence="2">Kynurenine aminotransferase 3</fullName>
    </alternativeName>
    <alternativeName>
        <fullName>Kynurenine aminotransferase III</fullName>
        <shortName>KATIII</shortName>
    </alternativeName>
    <alternativeName>
        <fullName evidence="3">Kynurenine--glyoxylate transaminase</fullName>
        <ecNumber evidence="3">2.6.1.63</ecNumber>
    </alternativeName>
    <alternativeName>
        <fullName>Kynurenine--oxoglutarate transaminase III</fullName>
    </alternativeName>
</protein>
<gene>
    <name evidence="2" type="primary">KYAT3</name>
    <name type="synonym">CCBL2</name>
    <name type="synonym">KAT3</name>
</gene>
<feature type="chain" id="PRO_0000287703" description="Kynurenine--oxoglutarate transaminase 3">
    <location>
        <begin position="1"/>
        <end position="455"/>
    </location>
</feature>
<feature type="binding site" evidence="1">
    <location>
        <position position="71"/>
    </location>
    <ligand>
        <name>substrate</name>
    </ligand>
</feature>
<feature type="binding site" evidence="1">
    <location>
        <position position="218"/>
    </location>
    <ligand>
        <name>substrate</name>
    </ligand>
</feature>
<feature type="binding site" evidence="1">
    <location>
        <position position="430"/>
    </location>
    <ligand>
        <name>substrate</name>
    </ligand>
</feature>
<feature type="modified residue" description="N6-acetyllysine; alternate" evidence="2">
    <location>
        <position position="116"/>
    </location>
</feature>
<feature type="modified residue" description="N6-succinyllysine; alternate" evidence="3">
    <location>
        <position position="116"/>
    </location>
</feature>
<feature type="modified residue" description="N6-(pyridoxal phosphate)lysine" evidence="1">
    <location>
        <position position="280"/>
    </location>
</feature>
<name>KAT3_BOVIN</name>
<sequence>MFLAWERLCTLSCRPKFLKTVWASKILGLSTSAKMSLRFKNAKRIEGLDSNIWIEFTKLAADPSVVNLGQGLPDISPPVYVKEELSKIAAIDNLNQYTRGFGHPSLVKALSCLYEKFYHNKINPNEEILVTVGAYGSLFNAIQGLIDEGDEVIVIVPFFDCYESMVRMAGATPVFVPLRCKPVDGKKCSSSDWTLDPQELASKFNSKTKAIILNTPHNPLGKVYTKEELQVIADLCIKYDTLCISDEVYEWLVYTGNKHFKIATFPGMWERTITIGSAGKTFSVTGWKLGWSIGPKHLIKHLQTVQQNTVYTCATPLQEALAQAFWIDIKRMDDPECYFNSLPKELEVKRDRMVHLLESVGLKSIVPDGGYFIIADVSLLDVDLLDMKDSNEPYDYKFVKWMIKNKKLSAIPVSAFCNAETKSQFEKFVRFCFIKKDSTLDAAEEIIKAWSRQNS</sequence>
<dbReference type="EC" id="2.6.1.7" evidence="3"/>
<dbReference type="EC" id="4.4.1.13" evidence="3"/>
<dbReference type="EC" id="2.6.1.63" evidence="3"/>
<dbReference type="EMBL" id="BC120067">
    <property type="protein sequence ID" value="AAI20068.1"/>
    <property type="molecule type" value="mRNA"/>
</dbReference>
<dbReference type="RefSeq" id="NP_001068838.1">
    <property type="nucleotide sequence ID" value="NM_001075370.1"/>
</dbReference>
<dbReference type="SMR" id="Q0P5G4"/>
<dbReference type="FunCoup" id="Q0P5G4">
    <property type="interactions" value="1727"/>
</dbReference>
<dbReference type="STRING" id="9913.ENSBTAP00000000643"/>
<dbReference type="PaxDb" id="9913-ENSBTAP00000000643"/>
<dbReference type="GeneID" id="508712"/>
<dbReference type="KEGG" id="bta:508712"/>
<dbReference type="CTD" id="56267"/>
<dbReference type="VEuPathDB" id="HostDB:ENSBTAG00000000505"/>
<dbReference type="eggNOG" id="KOG0257">
    <property type="taxonomic scope" value="Eukaryota"/>
</dbReference>
<dbReference type="HOGENOM" id="CLU_017584_4_0_1"/>
<dbReference type="InParanoid" id="Q0P5G4"/>
<dbReference type="OMA" id="PRDFKLC"/>
<dbReference type="OrthoDB" id="2414662at2759"/>
<dbReference type="TreeFam" id="TF352342"/>
<dbReference type="UniPathway" id="UPA00334">
    <property type="reaction ID" value="UER00726"/>
</dbReference>
<dbReference type="Proteomes" id="UP000009136">
    <property type="component" value="Chromosome 3"/>
</dbReference>
<dbReference type="Bgee" id="ENSBTAG00000000505">
    <property type="expression patterns" value="Expressed in granulosa cell and 104 other cell types or tissues"/>
</dbReference>
<dbReference type="GO" id="GO:0005737">
    <property type="term" value="C:cytoplasm"/>
    <property type="evidence" value="ECO:0000318"/>
    <property type="project" value="GO_Central"/>
</dbReference>
<dbReference type="GO" id="GO:0005739">
    <property type="term" value="C:mitochondrion"/>
    <property type="evidence" value="ECO:0000318"/>
    <property type="project" value="GO_Central"/>
</dbReference>
<dbReference type="GO" id="GO:0047804">
    <property type="term" value="F:cysteine-S-conjugate beta-lyase activity"/>
    <property type="evidence" value="ECO:0007669"/>
    <property type="project" value="UniProtKB-EC"/>
</dbReference>
<dbReference type="GO" id="GO:0047315">
    <property type="term" value="F:kynurenine-glyoxylate transaminase activity"/>
    <property type="evidence" value="ECO:0000250"/>
    <property type="project" value="UniProtKB"/>
</dbReference>
<dbReference type="GO" id="GO:0016212">
    <property type="term" value="F:kynurenine-oxoglutarate transaminase activity"/>
    <property type="evidence" value="ECO:0000250"/>
    <property type="project" value="UniProtKB"/>
</dbReference>
<dbReference type="GO" id="GO:0030170">
    <property type="term" value="F:pyridoxal phosphate binding"/>
    <property type="evidence" value="ECO:0007669"/>
    <property type="project" value="InterPro"/>
</dbReference>
<dbReference type="GO" id="GO:0006520">
    <property type="term" value="P:amino acid metabolic process"/>
    <property type="evidence" value="ECO:0000250"/>
    <property type="project" value="UniProtKB"/>
</dbReference>
<dbReference type="GO" id="GO:0009058">
    <property type="term" value="P:biosynthetic process"/>
    <property type="evidence" value="ECO:0007669"/>
    <property type="project" value="InterPro"/>
</dbReference>
<dbReference type="GO" id="GO:0070189">
    <property type="term" value="P:kynurenine metabolic process"/>
    <property type="evidence" value="ECO:0000250"/>
    <property type="project" value="UniProtKB"/>
</dbReference>
<dbReference type="GO" id="GO:0097053">
    <property type="term" value="P:L-kynurenine catabolic process"/>
    <property type="evidence" value="ECO:0007669"/>
    <property type="project" value="UniProtKB-UniPathway"/>
</dbReference>
<dbReference type="CDD" id="cd00609">
    <property type="entry name" value="AAT_like"/>
    <property type="match status" value="1"/>
</dbReference>
<dbReference type="FunFam" id="3.40.640.10:FF:000024">
    <property type="entry name" value="Kynurenine--oxoglutarate transaminase 3"/>
    <property type="match status" value="1"/>
</dbReference>
<dbReference type="FunFam" id="3.90.1150.10:FF:000021">
    <property type="entry name" value="Kynurenine--oxoglutarate transaminase 3"/>
    <property type="match status" value="1"/>
</dbReference>
<dbReference type="Gene3D" id="3.90.1150.10">
    <property type="entry name" value="Aspartate Aminotransferase, domain 1"/>
    <property type="match status" value="1"/>
</dbReference>
<dbReference type="Gene3D" id="3.40.640.10">
    <property type="entry name" value="Type I PLP-dependent aspartate aminotransferase-like (Major domain)"/>
    <property type="match status" value="1"/>
</dbReference>
<dbReference type="InterPro" id="IPR004839">
    <property type="entry name" value="Aminotransferase_I/II_large"/>
</dbReference>
<dbReference type="InterPro" id="IPR051326">
    <property type="entry name" value="Kynurenine-oxoglutarate_AT"/>
</dbReference>
<dbReference type="InterPro" id="IPR015424">
    <property type="entry name" value="PyrdxlP-dep_Trfase"/>
</dbReference>
<dbReference type="InterPro" id="IPR015421">
    <property type="entry name" value="PyrdxlP-dep_Trfase_major"/>
</dbReference>
<dbReference type="InterPro" id="IPR015422">
    <property type="entry name" value="PyrdxlP-dep_Trfase_small"/>
</dbReference>
<dbReference type="PANTHER" id="PTHR43807">
    <property type="entry name" value="FI04487P"/>
    <property type="match status" value="1"/>
</dbReference>
<dbReference type="PANTHER" id="PTHR43807:SF6">
    <property type="entry name" value="KYNURENINE--OXOGLUTARATE TRANSAMINASE 3"/>
    <property type="match status" value="1"/>
</dbReference>
<dbReference type="Pfam" id="PF00155">
    <property type="entry name" value="Aminotran_1_2"/>
    <property type="match status" value="1"/>
</dbReference>
<dbReference type="SUPFAM" id="SSF53383">
    <property type="entry name" value="PLP-dependent transferases"/>
    <property type="match status" value="1"/>
</dbReference>
<organism>
    <name type="scientific">Bos taurus</name>
    <name type="common">Bovine</name>
    <dbReference type="NCBI Taxonomy" id="9913"/>
    <lineage>
        <taxon>Eukaryota</taxon>
        <taxon>Metazoa</taxon>
        <taxon>Chordata</taxon>
        <taxon>Craniata</taxon>
        <taxon>Vertebrata</taxon>
        <taxon>Euteleostomi</taxon>
        <taxon>Mammalia</taxon>
        <taxon>Eutheria</taxon>
        <taxon>Laurasiatheria</taxon>
        <taxon>Artiodactyla</taxon>
        <taxon>Ruminantia</taxon>
        <taxon>Pecora</taxon>
        <taxon>Bovidae</taxon>
        <taxon>Bovinae</taxon>
        <taxon>Bos</taxon>
    </lineage>
</organism>
<evidence type="ECO:0000250" key="1">
    <source>
        <dbReference type="UniProtKB" id="Q16773"/>
    </source>
</evidence>
<evidence type="ECO:0000250" key="2">
    <source>
        <dbReference type="UniProtKB" id="Q6YP21"/>
    </source>
</evidence>
<evidence type="ECO:0000250" key="3">
    <source>
        <dbReference type="UniProtKB" id="Q71RI9"/>
    </source>
</evidence>
<evidence type="ECO:0000305" key="4"/>
<proteinExistence type="evidence at transcript level"/>